<reference key="1">
    <citation type="journal article" date="2001" name="Proc. Natl. Acad. Sci. U.S.A.">
        <title>Analysis of the chromosome sequence of the legume symbiont Sinorhizobium meliloti strain 1021.</title>
        <authorList>
            <person name="Capela D."/>
            <person name="Barloy-Hubler F."/>
            <person name="Gouzy J."/>
            <person name="Bothe G."/>
            <person name="Ampe F."/>
            <person name="Batut J."/>
            <person name="Boistard P."/>
            <person name="Becker A."/>
            <person name="Boutry M."/>
            <person name="Cadieu E."/>
            <person name="Dreano S."/>
            <person name="Gloux S."/>
            <person name="Godrie T."/>
            <person name="Goffeau A."/>
            <person name="Kahn D."/>
            <person name="Kiss E."/>
            <person name="Lelaure V."/>
            <person name="Masuy D."/>
            <person name="Pohl T."/>
            <person name="Portetelle D."/>
            <person name="Puehler A."/>
            <person name="Purnelle B."/>
            <person name="Ramsperger U."/>
            <person name="Renard C."/>
            <person name="Thebault P."/>
            <person name="Vandenbol M."/>
            <person name="Weidner S."/>
            <person name="Galibert F."/>
        </authorList>
    </citation>
    <scope>NUCLEOTIDE SEQUENCE [LARGE SCALE GENOMIC DNA]</scope>
    <source>
        <strain>1021</strain>
    </source>
</reference>
<reference key="2">
    <citation type="journal article" date="2001" name="Science">
        <title>The composite genome of the legume symbiont Sinorhizobium meliloti.</title>
        <authorList>
            <person name="Galibert F."/>
            <person name="Finan T.M."/>
            <person name="Long S.R."/>
            <person name="Puehler A."/>
            <person name="Abola P."/>
            <person name="Ampe F."/>
            <person name="Barloy-Hubler F."/>
            <person name="Barnett M.J."/>
            <person name="Becker A."/>
            <person name="Boistard P."/>
            <person name="Bothe G."/>
            <person name="Boutry M."/>
            <person name="Bowser L."/>
            <person name="Buhrmester J."/>
            <person name="Cadieu E."/>
            <person name="Capela D."/>
            <person name="Chain P."/>
            <person name="Cowie A."/>
            <person name="Davis R.W."/>
            <person name="Dreano S."/>
            <person name="Federspiel N.A."/>
            <person name="Fisher R.F."/>
            <person name="Gloux S."/>
            <person name="Godrie T."/>
            <person name="Goffeau A."/>
            <person name="Golding B."/>
            <person name="Gouzy J."/>
            <person name="Gurjal M."/>
            <person name="Hernandez-Lucas I."/>
            <person name="Hong A."/>
            <person name="Huizar L."/>
            <person name="Hyman R.W."/>
            <person name="Jones T."/>
            <person name="Kahn D."/>
            <person name="Kahn M.L."/>
            <person name="Kalman S."/>
            <person name="Keating D.H."/>
            <person name="Kiss E."/>
            <person name="Komp C."/>
            <person name="Lelaure V."/>
            <person name="Masuy D."/>
            <person name="Palm C."/>
            <person name="Peck M.C."/>
            <person name="Pohl T.M."/>
            <person name="Portetelle D."/>
            <person name="Purnelle B."/>
            <person name="Ramsperger U."/>
            <person name="Surzycki R."/>
            <person name="Thebault P."/>
            <person name="Vandenbol M."/>
            <person name="Vorhoelter F.J."/>
            <person name="Weidner S."/>
            <person name="Wells D.H."/>
            <person name="Wong K."/>
            <person name="Yeh K.-C."/>
            <person name="Batut J."/>
        </authorList>
    </citation>
    <scope>NUCLEOTIDE SEQUENCE [LARGE SCALE GENOMIC DNA]</scope>
    <source>
        <strain>1021</strain>
    </source>
</reference>
<gene>
    <name evidence="1" type="primary">nuoI1</name>
    <name type="ordered locus">R01274</name>
    <name type="ORF">SMc01922</name>
</gene>
<organism>
    <name type="scientific">Rhizobium meliloti (strain 1021)</name>
    <name type="common">Ensifer meliloti</name>
    <name type="synonym">Sinorhizobium meliloti</name>
    <dbReference type="NCBI Taxonomy" id="266834"/>
    <lineage>
        <taxon>Bacteria</taxon>
        <taxon>Pseudomonadati</taxon>
        <taxon>Pseudomonadota</taxon>
        <taxon>Alphaproteobacteria</taxon>
        <taxon>Hyphomicrobiales</taxon>
        <taxon>Rhizobiaceae</taxon>
        <taxon>Sinorhizobium/Ensifer group</taxon>
        <taxon>Sinorhizobium</taxon>
    </lineage>
</organism>
<proteinExistence type="inferred from homology"/>
<comment type="function">
    <text evidence="1">NDH-1 shuttles electrons from NADH, via FMN and iron-sulfur (Fe-S) centers, to quinones in the respiratory chain. The immediate electron acceptor for the enzyme in this species is believed to be ubiquinone. Couples the redox reaction to proton translocation (for every two electrons transferred, four hydrogen ions are translocated across the cytoplasmic membrane), and thus conserves the redox energy in a proton gradient.</text>
</comment>
<comment type="catalytic activity">
    <reaction evidence="1">
        <text>a quinone + NADH + 5 H(+)(in) = a quinol + NAD(+) + 4 H(+)(out)</text>
        <dbReference type="Rhea" id="RHEA:57888"/>
        <dbReference type="ChEBI" id="CHEBI:15378"/>
        <dbReference type="ChEBI" id="CHEBI:24646"/>
        <dbReference type="ChEBI" id="CHEBI:57540"/>
        <dbReference type="ChEBI" id="CHEBI:57945"/>
        <dbReference type="ChEBI" id="CHEBI:132124"/>
    </reaction>
</comment>
<comment type="cofactor">
    <cofactor evidence="1">
        <name>[4Fe-4S] cluster</name>
        <dbReference type="ChEBI" id="CHEBI:49883"/>
    </cofactor>
    <text evidence="1">Binds 2 [4Fe-4S] clusters per subunit.</text>
</comment>
<comment type="subunit">
    <text evidence="1">NDH-1 is composed of 14 different subunits. Subunits NuoA, H, J, K, L, M, N constitute the membrane sector of the complex.</text>
</comment>
<comment type="subcellular location">
    <subcellularLocation>
        <location evidence="1">Cell inner membrane</location>
        <topology evidence="1">Peripheral membrane protein</topology>
    </subcellularLocation>
</comment>
<comment type="similarity">
    <text evidence="1">Belongs to the complex I 23 kDa subunit family.</text>
</comment>
<feature type="chain" id="PRO_0000250932" description="NADH-quinone oxidoreductase subunit I 1">
    <location>
        <begin position="1"/>
        <end position="164"/>
    </location>
</feature>
<feature type="domain" description="4Fe-4S ferredoxin-type 1" evidence="1">
    <location>
        <begin position="54"/>
        <end position="84"/>
    </location>
</feature>
<feature type="domain" description="4Fe-4S ferredoxin-type 2" evidence="1">
    <location>
        <begin position="95"/>
        <end position="124"/>
    </location>
</feature>
<feature type="binding site" evidence="1">
    <location>
        <position position="64"/>
    </location>
    <ligand>
        <name>[4Fe-4S] cluster</name>
        <dbReference type="ChEBI" id="CHEBI:49883"/>
        <label>1</label>
    </ligand>
</feature>
<feature type="binding site" evidence="1">
    <location>
        <position position="67"/>
    </location>
    <ligand>
        <name>[4Fe-4S] cluster</name>
        <dbReference type="ChEBI" id="CHEBI:49883"/>
        <label>1</label>
    </ligand>
</feature>
<feature type="binding site" evidence="1">
    <location>
        <position position="70"/>
    </location>
    <ligand>
        <name>[4Fe-4S] cluster</name>
        <dbReference type="ChEBI" id="CHEBI:49883"/>
        <label>1</label>
    </ligand>
</feature>
<feature type="binding site" evidence="1">
    <location>
        <position position="74"/>
    </location>
    <ligand>
        <name>[4Fe-4S] cluster</name>
        <dbReference type="ChEBI" id="CHEBI:49883"/>
        <label>2</label>
    </ligand>
</feature>
<feature type="binding site" evidence="1">
    <location>
        <position position="104"/>
    </location>
    <ligand>
        <name>[4Fe-4S] cluster</name>
        <dbReference type="ChEBI" id="CHEBI:49883"/>
        <label>2</label>
    </ligand>
</feature>
<feature type="binding site" evidence="1">
    <location>
        <position position="107"/>
    </location>
    <ligand>
        <name>[4Fe-4S] cluster</name>
        <dbReference type="ChEBI" id="CHEBI:49883"/>
        <label>2</label>
    </ligand>
</feature>
<feature type="binding site" evidence="1">
    <location>
        <position position="110"/>
    </location>
    <ligand>
        <name>[4Fe-4S] cluster</name>
        <dbReference type="ChEBI" id="CHEBI:49883"/>
        <label>2</label>
    </ligand>
</feature>
<feature type="binding site" evidence="1">
    <location>
        <position position="114"/>
    </location>
    <ligand>
        <name>[4Fe-4S] cluster</name>
        <dbReference type="ChEBI" id="CHEBI:49883"/>
        <label>1</label>
    </ligand>
</feature>
<accession>Q92QP4</accession>
<name>NUOI1_RHIME</name>
<keyword id="KW-0004">4Fe-4S</keyword>
<keyword id="KW-0997">Cell inner membrane</keyword>
<keyword id="KW-1003">Cell membrane</keyword>
<keyword id="KW-0408">Iron</keyword>
<keyword id="KW-0411">Iron-sulfur</keyword>
<keyword id="KW-0472">Membrane</keyword>
<keyword id="KW-0479">Metal-binding</keyword>
<keyword id="KW-0520">NAD</keyword>
<keyword id="KW-0874">Quinone</keyword>
<keyword id="KW-1185">Reference proteome</keyword>
<keyword id="KW-0677">Repeat</keyword>
<keyword id="KW-1278">Translocase</keyword>
<keyword id="KW-0830">Ubiquinone</keyword>
<evidence type="ECO:0000255" key="1">
    <source>
        <dbReference type="HAMAP-Rule" id="MF_01351"/>
    </source>
</evidence>
<protein>
    <recommendedName>
        <fullName evidence="1">NADH-quinone oxidoreductase subunit I 1</fullName>
        <ecNumber evidence="1">7.1.1.-</ecNumber>
    </recommendedName>
    <alternativeName>
        <fullName evidence="1">NADH dehydrogenase I subunit I 1</fullName>
    </alternativeName>
    <alternativeName>
        <fullName evidence="1">NDH-1 subunit I 1</fullName>
    </alternativeName>
</protein>
<sequence length="164" mass="18860">MMAGLSNAVSSLFLKEFVGAFLLSMRYFFRPKATLNYPFEKGPVSPRFRGEHALRRYPNGEERCIACKLCEAICPAQAITIEAGPRRNDGTRRTVRYDIDMVKCIYCGFCQEACPVDAIVEGPNFEFSTETREELYYDKEKLLANGDRWEREIARNIAMDSPYR</sequence>
<dbReference type="EC" id="7.1.1.-" evidence="1"/>
<dbReference type="EMBL" id="AL591688">
    <property type="protein sequence ID" value="CAC45853.1"/>
    <property type="molecule type" value="Genomic_DNA"/>
</dbReference>
<dbReference type="RefSeq" id="NP_385380.1">
    <property type="nucleotide sequence ID" value="NC_003047.1"/>
</dbReference>
<dbReference type="SMR" id="Q92QP4"/>
<dbReference type="EnsemblBacteria" id="CAC45853">
    <property type="protein sequence ID" value="CAC45853"/>
    <property type="gene ID" value="SMc01922"/>
</dbReference>
<dbReference type="KEGG" id="sme:SMc01922"/>
<dbReference type="PATRIC" id="fig|266834.11.peg.2688"/>
<dbReference type="eggNOG" id="COG1143">
    <property type="taxonomic scope" value="Bacteria"/>
</dbReference>
<dbReference type="HOGENOM" id="CLU_067218_5_1_5"/>
<dbReference type="OrthoDB" id="9808559at2"/>
<dbReference type="Proteomes" id="UP000001976">
    <property type="component" value="Chromosome"/>
</dbReference>
<dbReference type="GO" id="GO:0005886">
    <property type="term" value="C:plasma membrane"/>
    <property type="evidence" value="ECO:0007669"/>
    <property type="project" value="UniProtKB-SubCell"/>
</dbReference>
<dbReference type="GO" id="GO:0051539">
    <property type="term" value="F:4 iron, 4 sulfur cluster binding"/>
    <property type="evidence" value="ECO:0007669"/>
    <property type="project" value="UniProtKB-KW"/>
</dbReference>
<dbReference type="GO" id="GO:0005506">
    <property type="term" value="F:iron ion binding"/>
    <property type="evidence" value="ECO:0007669"/>
    <property type="project" value="UniProtKB-UniRule"/>
</dbReference>
<dbReference type="GO" id="GO:0050136">
    <property type="term" value="F:NADH:ubiquinone reductase (non-electrogenic) activity"/>
    <property type="evidence" value="ECO:0007669"/>
    <property type="project" value="UniProtKB-UniRule"/>
</dbReference>
<dbReference type="GO" id="GO:0048038">
    <property type="term" value="F:quinone binding"/>
    <property type="evidence" value="ECO:0007669"/>
    <property type="project" value="UniProtKB-KW"/>
</dbReference>
<dbReference type="GO" id="GO:0009060">
    <property type="term" value="P:aerobic respiration"/>
    <property type="evidence" value="ECO:0007669"/>
    <property type="project" value="TreeGrafter"/>
</dbReference>
<dbReference type="FunFam" id="3.30.70.3270:FF:000001">
    <property type="entry name" value="NADH-quinone oxidoreductase subunit I 1"/>
    <property type="match status" value="1"/>
</dbReference>
<dbReference type="Gene3D" id="3.30.70.3270">
    <property type="match status" value="1"/>
</dbReference>
<dbReference type="HAMAP" id="MF_01351">
    <property type="entry name" value="NDH1_NuoI"/>
    <property type="match status" value="1"/>
</dbReference>
<dbReference type="InterPro" id="IPR017896">
    <property type="entry name" value="4Fe4S_Fe-S-bd"/>
</dbReference>
<dbReference type="InterPro" id="IPR017900">
    <property type="entry name" value="4Fe4S_Fe_S_CS"/>
</dbReference>
<dbReference type="InterPro" id="IPR010226">
    <property type="entry name" value="NADH_quinone_OxRdtase_chainI"/>
</dbReference>
<dbReference type="NCBIfam" id="TIGR01971">
    <property type="entry name" value="NuoI"/>
    <property type="match status" value="1"/>
</dbReference>
<dbReference type="NCBIfam" id="NF004538">
    <property type="entry name" value="PRK05888.1-4"/>
    <property type="match status" value="1"/>
</dbReference>
<dbReference type="NCBIfam" id="NF004539">
    <property type="entry name" value="PRK05888.1-5"/>
    <property type="match status" value="1"/>
</dbReference>
<dbReference type="PANTHER" id="PTHR10849:SF20">
    <property type="entry name" value="NADH DEHYDROGENASE [UBIQUINONE] IRON-SULFUR PROTEIN 8, MITOCHONDRIAL"/>
    <property type="match status" value="1"/>
</dbReference>
<dbReference type="PANTHER" id="PTHR10849">
    <property type="entry name" value="NADH DEHYDROGENASE UBIQUINONE IRON-SULFUR PROTEIN 8, MITOCHONDRIAL"/>
    <property type="match status" value="1"/>
</dbReference>
<dbReference type="Pfam" id="PF12838">
    <property type="entry name" value="Fer4_7"/>
    <property type="match status" value="1"/>
</dbReference>
<dbReference type="SUPFAM" id="SSF54862">
    <property type="entry name" value="4Fe-4S ferredoxins"/>
    <property type="match status" value="1"/>
</dbReference>
<dbReference type="PROSITE" id="PS00198">
    <property type="entry name" value="4FE4S_FER_1"/>
    <property type="match status" value="2"/>
</dbReference>
<dbReference type="PROSITE" id="PS51379">
    <property type="entry name" value="4FE4S_FER_2"/>
    <property type="match status" value="2"/>
</dbReference>